<comment type="function">
    <text evidence="1">Carrier of the growing fatty acid chain in fatty acid biosynthesis.</text>
</comment>
<comment type="pathway">
    <text evidence="1">Lipid metabolism; fatty acid biosynthesis.</text>
</comment>
<comment type="subcellular location">
    <subcellularLocation>
        <location evidence="1">Cytoplasm</location>
    </subcellularLocation>
</comment>
<comment type="PTM">
    <text evidence="1">4'-phosphopantetheine is transferred from CoA to a specific serine of apo-ACP by AcpS. This modification is essential for activity because fatty acids are bound in thioester linkage to the sulfhydryl of the prosthetic group.</text>
</comment>
<comment type="similarity">
    <text evidence="1">Belongs to the acyl carrier protein (ACP) family.</text>
</comment>
<dbReference type="EMBL" id="CP001034">
    <property type="protein sequence ID" value="ACB84944.1"/>
    <property type="molecule type" value="Genomic_DNA"/>
</dbReference>
<dbReference type="RefSeq" id="WP_012447819.1">
    <property type="nucleotide sequence ID" value="NC_010718.1"/>
</dbReference>
<dbReference type="SMR" id="B2A2M9"/>
<dbReference type="FunCoup" id="B2A2M9">
    <property type="interactions" value="315"/>
</dbReference>
<dbReference type="STRING" id="457570.Nther_1361"/>
<dbReference type="KEGG" id="nth:Nther_1361"/>
<dbReference type="eggNOG" id="COG0236">
    <property type="taxonomic scope" value="Bacteria"/>
</dbReference>
<dbReference type="HOGENOM" id="CLU_108696_5_1_9"/>
<dbReference type="InParanoid" id="B2A2M9"/>
<dbReference type="OrthoDB" id="9804551at2"/>
<dbReference type="UniPathway" id="UPA00094"/>
<dbReference type="Proteomes" id="UP000001683">
    <property type="component" value="Chromosome"/>
</dbReference>
<dbReference type="GO" id="GO:0005829">
    <property type="term" value="C:cytosol"/>
    <property type="evidence" value="ECO:0007669"/>
    <property type="project" value="TreeGrafter"/>
</dbReference>
<dbReference type="GO" id="GO:0016020">
    <property type="term" value="C:membrane"/>
    <property type="evidence" value="ECO:0007669"/>
    <property type="project" value="GOC"/>
</dbReference>
<dbReference type="GO" id="GO:0000035">
    <property type="term" value="F:acyl binding"/>
    <property type="evidence" value="ECO:0007669"/>
    <property type="project" value="TreeGrafter"/>
</dbReference>
<dbReference type="GO" id="GO:0000036">
    <property type="term" value="F:acyl carrier activity"/>
    <property type="evidence" value="ECO:0007669"/>
    <property type="project" value="UniProtKB-UniRule"/>
</dbReference>
<dbReference type="GO" id="GO:0009245">
    <property type="term" value="P:lipid A biosynthetic process"/>
    <property type="evidence" value="ECO:0007669"/>
    <property type="project" value="TreeGrafter"/>
</dbReference>
<dbReference type="FunFam" id="1.10.1200.10:FF:000003">
    <property type="entry name" value="Acyl carrier protein"/>
    <property type="match status" value="1"/>
</dbReference>
<dbReference type="Gene3D" id="1.10.1200.10">
    <property type="entry name" value="ACP-like"/>
    <property type="match status" value="1"/>
</dbReference>
<dbReference type="HAMAP" id="MF_01217">
    <property type="entry name" value="Acyl_carrier"/>
    <property type="match status" value="1"/>
</dbReference>
<dbReference type="InterPro" id="IPR003231">
    <property type="entry name" value="ACP"/>
</dbReference>
<dbReference type="InterPro" id="IPR036736">
    <property type="entry name" value="ACP-like_sf"/>
</dbReference>
<dbReference type="InterPro" id="IPR009081">
    <property type="entry name" value="PP-bd_ACP"/>
</dbReference>
<dbReference type="NCBIfam" id="TIGR00517">
    <property type="entry name" value="acyl_carrier"/>
    <property type="match status" value="1"/>
</dbReference>
<dbReference type="NCBIfam" id="NF002148">
    <property type="entry name" value="PRK00982.1-2"/>
    <property type="match status" value="1"/>
</dbReference>
<dbReference type="NCBIfam" id="NF002150">
    <property type="entry name" value="PRK00982.1-4"/>
    <property type="match status" value="1"/>
</dbReference>
<dbReference type="NCBIfam" id="NF002151">
    <property type="entry name" value="PRK00982.1-5"/>
    <property type="match status" value="1"/>
</dbReference>
<dbReference type="PANTHER" id="PTHR20863">
    <property type="entry name" value="ACYL CARRIER PROTEIN"/>
    <property type="match status" value="1"/>
</dbReference>
<dbReference type="PANTHER" id="PTHR20863:SF76">
    <property type="entry name" value="CARRIER DOMAIN-CONTAINING PROTEIN"/>
    <property type="match status" value="1"/>
</dbReference>
<dbReference type="Pfam" id="PF00550">
    <property type="entry name" value="PP-binding"/>
    <property type="match status" value="1"/>
</dbReference>
<dbReference type="SUPFAM" id="SSF47336">
    <property type="entry name" value="ACP-like"/>
    <property type="match status" value="1"/>
</dbReference>
<dbReference type="PROSITE" id="PS50075">
    <property type="entry name" value="CARRIER"/>
    <property type="match status" value="1"/>
</dbReference>
<organism>
    <name type="scientific">Natranaerobius thermophilus (strain ATCC BAA-1301 / DSM 18059 / JW/NM-WN-LF)</name>
    <dbReference type="NCBI Taxonomy" id="457570"/>
    <lineage>
        <taxon>Bacteria</taxon>
        <taxon>Bacillati</taxon>
        <taxon>Bacillota</taxon>
        <taxon>Clostridia</taxon>
        <taxon>Natranaerobiales</taxon>
        <taxon>Natranaerobiaceae</taxon>
        <taxon>Natranaerobius</taxon>
    </lineage>
</organism>
<name>ACP_NATTJ</name>
<keyword id="KW-0963">Cytoplasm</keyword>
<keyword id="KW-0275">Fatty acid biosynthesis</keyword>
<keyword id="KW-0276">Fatty acid metabolism</keyword>
<keyword id="KW-0444">Lipid biosynthesis</keyword>
<keyword id="KW-0443">Lipid metabolism</keyword>
<keyword id="KW-0596">Phosphopantetheine</keyword>
<keyword id="KW-0597">Phosphoprotein</keyword>
<keyword id="KW-1185">Reference proteome</keyword>
<reference key="1">
    <citation type="submission" date="2008-04" db="EMBL/GenBank/DDBJ databases">
        <title>Complete sequence of chromosome of Natranaerobius thermophilus JW/NM-WN-LF.</title>
        <authorList>
            <consortium name="US DOE Joint Genome Institute"/>
            <person name="Copeland A."/>
            <person name="Lucas S."/>
            <person name="Lapidus A."/>
            <person name="Glavina del Rio T."/>
            <person name="Dalin E."/>
            <person name="Tice H."/>
            <person name="Bruce D."/>
            <person name="Goodwin L."/>
            <person name="Pitluck S."/>
            <person name="Chertkov O."/>
            <person name="Brettin T."/>
            <person name="Detter J.C."/>
            <person name="Han C."/>
            <person name="Kuske C.R."/>
            <person name="Schmutz J."/>
            <person name="Larimer F."/>
            <person name="Land M."/>
            <person name="Hauser L."/>
            <person name="Kyrpides N."/>
            <person name="Lykidis A."/>
            <person name="Mesbah N.M."/>
            <person name="Wiegel J."/>
        </authorList>
    </citation>
    <scope>NUCLEOTIDE SEQUENCE [LARGE SCALE GENOMIC DNA]</scope>
    <source>
        <strain>ATCC BAA-1301 / DSM 18059 / JW/NM-WN-LF</strain>
    </source>
</reference>
<evidence type="ECO:0000255" key="1">
    <source>
        <dbReference type="HAMAP-Rule" id="MF_01217"/>
    </source>
</evidence>
<evidence type="ECO:0000255" key="2">
    <source>
        <dbReference type="PROSITE-ProRule" id="PRU00258"/>
    </source>
</evidence>
<feature type="chain" id="PRO_1000164794" description="Acyl carrier protein">
    <location>
        <begin position="1"/>
        <end position="76"/>
    </location>
</feature>
<feature type="domain" description="Carrier" evidence="2">
    <location>
        <begin position="1"/>
        <end position="76"/>
    </location>
</feature>
<feature type="modified residue" description="O-(pantetheine 4'-phosphoryl)serine" evidence="2">
    <location>
        <position position="36"/>
    </location>
</feature>
<accession>B2A2M9</accession>
<protein>
    <recommendedName>
        <fullName evidence="1">Acyl carrier protein</fullName>
        <shortName evidence="1">ACP</shortName>
    </recommendedName>
</protein>
<gene>
    <name evidence="1" type="primary">acpP</name>
    <name type="ordered locus">Nther_1361</name>
</gene>
<sequence length="76" mass="8639">MATFDKVKDIVVDQLGVDEDQVTMEANFTEDLEADSLDIVELIMAMEEEFDMEISDEEAEKMSTVGDVVNYIEQNQ</sequence>
<proteinExistence type="inferred from homology"/>